<proteinExistence type="inferred from homology"/>
<comment type="similarity">
    <text evidence="3">Belongs to the chlamydial CPn_0572/CT_456/TC_0741 family.</text>
</comment>
<keyword id="KW-0732">Signal</keyword>
<name>Y741_CHLMU</name>
<protein>
    <recommendedName>
        <fullName>Uncharacterized protein TC_0741</fullName>
    </recommendedName>
</protein>
<sequence length="1007" mass="104006">MTTPISNSPSSIPTVTVSTTTASSGSLGTSTVSSTTTSTSVAQTATTTSSASTSIIQSSGENIQSTTGTPSPITSSVSTSAPSPKASATANKTSSAVSGKITSQETSEESETQATTSDGEVSSNYDDVDTPTNSSDSTVDSDYQDVETQYKTISNNGENTYETIGSHGEKNTHVQESHASGTGNPINNQQEAIRQLRSSTYTTSPRNENIFSPGPEGLPNMSLPSYSPTDKSSLLAFLSNPNTKAKMLEHSGHLVFIDTTRSSFIFVPNGNWDQVCSMKVQNGKTKEDLGLKDLEDMCAKFCTGYNKFSSDWGNRVDPLVSSKAGIESGGHLPSSVIINNKFRTCVAYGPWNPKENGPNYTPSAWRRGHRVDFGKIFDGTAPFNKINWGSSPTPGDDGISFSNETIGSEPFATPPSSPSQTPVINVNVNVGGTNVNIGDTNVSKGSGTPTSSQSVDMSTDTSDLDTSDIDTNNQTNGDINTNDNSNNVDGSLSDVDSRVEDDDGVSDTESTNGNDSGKTTSTEENGDPSGPDILAAVRKHLDTVYPGENGGSTEGPLPANQNLGNVIHDVEQNGSAKETIITPGDTGPTDSSSSVDADADVEDTSDTDSGIGDDDGVSDTESTNGNNSGKTTSTEENGDPSGPDILAAVRKHLDTVYPGENGGSTEGPLPANQNLGNVIHDVEQNGAAQETIITPGDTESTDTSSSVNANADLEDVSDADSGFGDDDGISDTESTNGNDSGKNTPVGDGGTPSGPDILAAVRKHLDTVYPGENGGSTERPLPANQNLGDIIHDVEQNGSAKETVVSPYRGGGGNTSSPIGLASLLPATPSTPLMTTPRTNGKAAASSLMIKGGETQAKLVKNGGNIPGETTLAELLPRLRGHLDKVFTSDGKFTNLNGPQLGAIIDQFRKETGSGGIIAHTDSVPGENGTASPLTGSSGEKVSLYDAAKNVTQALTSVTNKVTLAMQGQKLEGIINNNNTPSSIGQNLFAAARATTQSLSSLIGTVQ</sequence>
<gene>
    <name type="ordered locus">TC_0741</name>
</gene>
<dbReference type="EMBL" id="AE002160">
    <property type="protein sequence ID" value="AAF39550.1"/>
    <property type="molecule type" value="Genomic_DNA"/>
</dbReference>
<dbReference type="PIR" id="H81670">
    <property type="entry name" value="H81670"/>
</dbReference>
<dbReference type="GeneID" id="1246104"/>
<dbReference type="KEGG" id="cmu:TC_0741"/>
<dbReference type="HOGENOM" id="CLU_011849_0_0_0"/>
<dbReference type="OrthoDB" id="16908at2"/>
<dbReference type="Proteomes" id="UP000000800">
    <property type="component" value="Chromosome"/>
</dbReference>
<dbReference type="InterPro" id="IPR053108">
    <property type="entry name" value="Chlamydial_TARP"/>
</dbReference>
<dbReference type="InterPro" id="IPR011443">
    <property type="entry name" value="DUF1547"/>
</dbReference>
<dbReference type="NCBIfam" id="NF033567">
    <property type="entry name" value="act_recrut_TARP"/>
    <property type="match status" value="1"/>
</dbReference>
<dbReference type="PANTHER" id="PTHR36975">
    <property type="match status" value="1"/>
</dbReference>
<dbReference type="PANTHER" id="PTHR36975:SF5">
    <property type="entry name" value="TRANSLOCATED ACTIN-RECRUITING PHOSPHOPROTEIN"/>
    <property type="match status" value="1"/>
</dbReference>
<dbReference type="Pfam" id="PF07577">
    <property type="entry name" value="DUF1547"/>
    <property type="match status" value="4"/>
</dbReference>
<evidence type="ECO:0000255" key="1"/>
<evidence type="ECO:0000256" key="2">
    <source>
        <dbReference type="SAM" id="MobiDB-lite"/>
    </source>
</evidence>
<evidence type="ECO:0000305" key="3"/>
<feature type="signal peptide" evidence="1">
    <location>
        <begin position="1"/>
        <end position="51"/>
    </location>
</feature>
<feature type="chain" id="PRO_0000013756" description="Uncharacterized protein TC_0741">
    <location>
        <begin position="52"/>
        <end position="1007"/>
    </location>
</feature>
<feature type="region of interest" description="Disordered" evidence="2">
    <location>
        <begin position="1"/>
        <end position="186"/>
    </location>
</feature>
<feature type="region of interest" description="Disordered" evidence="2">
    <location>
        <begin position="200"/>
        <end position="224"/>
    </location>
</feature>
<feature type="region of interest" description="Disordered" evidence="2">
    <location>
        <begin position="387"/>
        <end position="533"/>
    </location>
</feature>
<feature type="region of interest" description="Disordered" evidence="2">
    <location>
        <begin position="543"/>
        <end position="562"/>
    </location>
</feature>
<feature type="region of interest" description="Disordered" evidence="2">
    <location>
        <begin position="578"/>
        <end position="645"/>
    </location>
</feature>
<feature type="region of interest" description="Disordered" evidence="2">
    <location>
        <begin position="655"/>
        <end position="674"/>
    </location>
</feature>
<feature type="region of interest" description="Disordered" evidence="2">
    <location>
        <begin position="712"/>
        <end position="757"/>
    </location>
</feature>
<feature type="compositionally biased region" description="Low complexity" evidence="2">
    <location>
        <begin position="1"/>
        <end position="96"/>
    </location>
</feature>
<feature type="compositionally biased region" description="Polar residues" evidence="2">
    <location>
        <begin position="118"/>
        <end position="163"/>
    </location>
</feature>
<feature type="compositionally biased region" description="Basic and acidic residues" evidence="2">
    <location>
        <begin position="167"/>
        <end position="176"/>
    </location>
</feature>
<feature type="compositionally biased region" description="Polar residues" evidence="2">
    <location>
        <begin position="177"/>
        <end position="186"/>
    </location>
</feature>
<feature type="compositionally biased region" description="Polar residues" evidence="2">
    <location>
        <begin position="200"/>
        <end position="210"/>
    </location>
</feature>
<feature type="compositionally biased region" description="Low complexity" evidence="2">
    <location>
        <begin position="423"/>
        <end position="442"/>
    </location>
</feature>
<feature type="compositionally biased region" description="Polar residues" evidence="2">
    <location>
        <begin position="443"/>
        <end position="453"/>
    </location>
</feature>
<feature type="compositionally biased region" description="Low complexity" evidence="2">
    <location>
        <begin position="469"/>
        <end position="491"/>
    </location>
</feature>
<feature type="compositionally biased region" description="Polar residues" evidence="2">
    <location>
        <begin position="507"/>
        <end position="523"/>
    </location>
</feature>
<feature type="compositionally biased region" description="Acidic residues" evidence="2">
    <location>
        <begin position="597"/>
        <end position="618"/>
    </location>
</feature>
<feature type="compositionally biased region" description="Low complexity" evidence="2">
    <location>
        <begin position="619"/>
        <end position="635"/>
    </location>
</feature>
<feature type="compositionally biased region" description="Acidic residues" evidence="2">
    <location>
        <begin position="712"/>
        <end position="730"/>
    </location>
</feature>
<feature type="compositionally biased region" description="Polar residues" evidence="2">
    <location>
        <begin position="732"/>
        <end position="743"/>
    </location>
</feature>
<reference key="1">
    <citation type="journal article" date="2000" name="Nucleic Acids Res.">
        <title>Genome sequences of Chlamydia trachomatis MoPn and Chlamydia pneumoniae AR39.</title>
        <authorList>
            <person name="Read T.D."/>
            <person name="Brunham R.C."/>
            <person name="Shen C."/>
            <person name="Gill S.R."/>
            <person name="Heidelberg J.F."/>
            <person name="White O."/>
            <person name="Hickey E.K."/>
            <person name="Peterson J.D."/>
            <person name="Utterback T.R."/>
            <person name="Berry K.J."/>
            <person name="Bass S."/>
            <person name="Linher K.D."/>
            <person name="Weidman J.F."/>
            <person name="Khouri H.M."/>
            <person name="Craven B."/>
            <person name="Bowman C."/>
            <person name="Dodson R.J."/>
            <person name="Gwinn M.L."/>
            <person name="Nelson W.C."/>
            <person name="DeBoy R.T."/>
            <person name="Kolonay J.F."/>
            <person name="McClarty G."/>
            <person name="Salzberg S.L."/>
            <person name="Eisen J.A."/>
            <person name="Fraser C.M."/>
        </authorList>
    </citation>
    <scope>NUCLEOTIDE SEQUENCE [LARGE SCALE GENOMIC DNA]</scope>
    <source>
        <strain>MoPn / Nigg</strain>
    </source>
</reference>
<accession>Q9PJT6</accession>
<organism>
    <name type="scientific">Chlamydia muridarum (strain MoPn / Nigg)</name>
    <dbReference type="NCBI Taxonomy" id="243161"/>
    <lineage>
        <taxon>Bacteria</taxon>
        <taxon>Pseudomonadati</taxon>
        <taxon>Chlamydiota</taxon>
        <taxon>Chlamydiia</taxon>
        <taxon>Chlamydiales</taxon>
        <taxon>Chlamydiaceae</taxon>
        <taxon>Chlamydia/Chlamydophila group</taxon>
        <taxon>Chlamydia</taxon>
    </lineage>
</organism>